<feature type="chain" id="PRO_0000175722" description="Holo-[acyl-carrier-protein] synthase">
    <location>
        <begin position="1"/>
        <end position="127"/>
    </location>
</feature>
<feature type="binding site" evidence="1">
    <location>
        <position position="8"/>
    </location>
    <ligand>
        <name>Mg(2+)</name>
        <dbReference type="ChEBI" id="CHEBI:18420"/>
    </ligand>
</feature>
<feature type="binding site" evidence="1">
    <location>
        <position position="56"/>
    </location>
    <ligand>
        <name>Mg(2+)</name>
        <dbReference type="ChEBI" id="CHEBI:18420"/>
    </ligand>
</feature>
<keyword id="KW-0963">Cytoplasm</keyword>
<keyword id="KW-0275">Fatty acid biosynthesis</keyword>
<keyword id="KW-0276">Fatty acid metabolism</keyword>
<keyword id="KW-0444">Lipid biosynthesis</keyword>
<keyword id="KW-0443">Lipid metabolism</keyword>
<keyword id="KW-0460">Magnesium</keyword>
<keyword id="KW-0479">Metal-binding</keyword>
<keyword id="KW-1185">Reference proteome</keyword>
<keyword id="KW-0808">Transferase</keyword>
<dbReference type="EC" id="2.7.8.7" evidence="1"/>
<dbReference type="EMBL" id="AE008691">
    <property type="protein sequence ID" value="AAM25330.1"/>
    <property type="molecule type" value="Genomic_DNA"/>
</dbReference>
<dbReference type="RefSeq" id="WP_011026257.1">
    <property type="nucleotide sequence ID" value="NC_003869.1"/>
</dbReference>
<dbReference type="SMR" id="Q8R857"/>
<dbReference type="STRING" id="273068.TTE2171"/>
<dbReference type="KEGG" id="tte:TTE2171"/>
<dbReference type="eggNOG" id="COG0736">
    <property type="taxonomic scope" value="Bacteria"/>
</dbReference>
<dbReference type="HOGENOM" id="CLU_089696_0_2_9"/>
<dbReference type="OrthoDB" id="517356at2"/>
<dbReference type="Proteomes" id="UP000000555">
    <property type="component" value="Chromosome"/>
</dbReference>
<dbReference type="GO" id="GO:0005829">
    <property type="term" value="C:cytosol"/>
    <property type="evidence" value="ECO:0007669"/>
    <property type="project" value="TreeGrafter"/>
</dbReference>
<dbReference type="GO" id="GO:0008897">
    <property type="term" value="F:holo-[acyl-carrier-protein] synthase activity"/>
    <property type="evidence" value="ECO:0007669"/>
    <property type="project" value="UniProtKB-UniRule"/>
</dbReference>
<dbReference type="GO" id="GO:0000287">
    <property type="term" value="F:magnesium ion binding"/>
    <property type="evidence" value="ECO:0007669"/>
    <property type="project" value="UniProtKB-UniRule"/>
</dbReference>
<dbReference type="GO" id="GO:0006633">
    <property type="term" value="P:fatty acid biosynthetic process"/>
    <property type="evidence" value="ECO:0007669"/>
    <property type="project" value="UniProtKB-UniRule"/>
</dbReference>
<dbReference type="GO" id="GO:0019878">
    <property type="term" value="P:lysine biosynthetic process via aminoadipic acid"/>
    <property type="evidence" value="ECO:0007669"/>
    <property type="project" value="TreeGrafter"/>
</dbReference>
<dbReference type="Gene3D" id="3.90.470.20">
    <property type="entry name" value="4'-phosphopantetheinyl transferase domain"/>
    <property type="match status" value="1"/>
</dbReference>
<dbReference type="HAMAP" id="MF_00101">
    <property type="entry name" value="AcpS"/>
    <property type="match status" value="1"/>
</dbReference>
<dbReference type="InterPro" id="IPR008278">
    <property type="entry name" value="4-PPantetheinyl_Trfase_dom"/>
</dbReference>
<dbReference type="InterPro" id="IPR037143">
    <property type="entry name" value="4-PPantetheinyl_Trfase_dom_sf"/>
</dbReference>
<dbReference type="InterPro" id="IPR002582">
    <property type="entry name" value="ACPS"/>
</dbReference>
<dbReference type="InterPro" id="IPR050559">
    <property type="entry name" value="P-Pant_transferase_sf"/>
</dbReference>
<dbReference type="InterPro" id="IPR004568">
    <property type="entry name" value="Ppantetheine-prot_Trfase_dom"/>
</dbReference>
<dbReference type="NCBIfam" id="TIGR00516">
    <property type="entry name" value="acpS"/>
    <property type="match status" value="1"/>
</dbReference>
<dbReference type="NCBIfam" id="TIGR00556">
    <property type="entry name" value="pantethn_trn"/>
    <property type="match status" value="1"/>
</dbReference>
<dbReference type="PANTHER" id="PTHR12215:SF10">
    <property type="entry name" value="L-AMINOADIPATE-SEMIALDEHYDE DEHYDROGENASE-PHOSPHOPANTETHEINYL TRANSFERASE"/>
    <property type="match status" value="1"/>
</dbReference>
<dbReference type="PANTHER" id="PTHR12215">
    <property type="entry name" value="PHOSPHOPANTETHEINE TRANSFERASE"/>
    <property type="match status" value="1"/>
</dbReference>
<dbReference type="Pfam" id="PF01648">
    <property type="entry name" value="ACPS"/>
    <property type="match status" value="1"/>
</dbReference>
<dbReference type="SUPFAM" id="SSF56214">
    <property type="entry name" value="4'-phosphopantetheinyl transferase"/>
    <property type="match status" value="1"/>
</dbReference>
<reference key="1">
    <citation type="journal article" date="2002" name="Genome Res.">
        <title>A complete sequence of the T. tengcongensis genome.</title>
        <authorList>
            <person name="Bao Q."/>
            <person name="Tian Y."/>
            <person name="Li W."/>
            <person name="Xu Z."/>
            <person name="Xuan Z."/>
            <person name="Hu S."/>
            <person name="Dong W."/>
            <person name="Yang J."/>
            <person name="Chen Y."/>
            <person name="Xue Y."/>
            <person name="Xu Y."/>
            <person name="Lai X."/>
            <person name="Huang L."/>
            <person name="Dong X."/>
            <person name="Ma Y."/>
            <person name="Ling L."/>
            <person name="Tan H."/>
            <person name="Chen R."/>
            <person name="Wang J."/>
            <person name="Yu J."/>
            <person name="Yang H."/>
        </authorList>
    </citation>
    <scope>NUCLEOTIDE SEQUENCE [LARGE SCALE GENOMIC DNA]</scope>
    <source>
        <strain>DSM 15242 / JCM 11007 / NBRC 100824 / MB4</strain>
    </source>
</reference>
<name>ACPS_CALS4</name>
<gene>
    <name evidence="1" type="primary">acpS</name>
    <name type="ordered locus">TTE2171</name>
</gene>
<protein>
    <recommendedName>
        <fullName evidence="1">Holo-[acyl-carrier-protein] synthase</fullName>
        <shortName evidence="1">Holo-ACP synthase</shortName>
        <ecNumber evidence="1">2.7.8.7</ecNumber>
    </recommendedName>
    <alternativeName>
        <fullName evidence="1">4'-phosphopantetheinyl transferase AcpS</fullName>
    </alternativeName>
</protein>
<organism>
    <name type="scientific">Caldanaerobacter subterraneus subsp. tengcongensis (strain DSM 15242 / JCM 11007 / NBRC 100824 / MB4)</name>
    <name type="common">Thermoanaerobacter tengcongensis</name>
    <dbReference type="NCBI Taxonomy" id="273068"/>
    <lineage>
        <taxon>Bacteria</taxon>
        <taxon>Bacillati</taxon>
        <taxon>Bacillota</taxon>
        <taxon>Clostridia</taxon>
        <taxon>Thermoanaerobacterales</taxon>
        <taxon>Thermoanaerobacteraceae</taxon>
        <taxon>Caldanaerobacter</taxon>
    </lineage>
</organism>
<comment type="function">
    <text evidence="1">Transfers the 4'-phosphopantetheine moiety from coenzyme A to a Ser of acyl-carrier-protein.</text>
</comment>
<comment type="catalytic activity">
    <reaction evidence="1">
        <text>apo-[ACP] + CoA = holo-[ACP] + adenosine 3',5'-bisphosphate + H(+)</text>
        <dbReference type="Rhea" id="RHEA:12068"/>
        <dbReference type="Rhea" id="RHEA-COMP:9685"/>
        <dbReference type="Rhea" id="RHEA-COMP:9690"/>
        <dbReference type="ChEBI" id="CHEBI:15378"/>
        <dbReference type="ChEBI" id="CHEBI:29999"/>
        <dbReference type="ChEBI" id="CHEBI:57287"/>
        <dbReference type="ChEBI" id="CHEBI:58343"/>
        <dbReference type="ChEBI" id="CHEBI:64479"/>
        <dbReference type="EC" id="2.7.8.7"/>
    </reaction>
</comment>
<comment type="cofactor">
    <cofactor evidence="1">
        <name>Mg(2+)</name>
        <dbReference type="ChEBI" id="CHEBI:18420"/>
    </cofactor>
</comment>
<comment type="subcellular location">
    <subcellularLocation>
        <location evidence="1">Cytoplasm</location>
    </subcellularLocation>
</comment>
<comment type="similarity">
    <text evidence="1">Belongs to the P-Pant transferase superfamily. AcpS family.</text>
</comment>
<proteinExistence type="inferred from homology"/>
<sequence>MEIFVGTDIMEVERIKKILEKRPHFLERIFTEKEREFLRKKKNPWPHLAGFFSAKESVSKVLGTGIRGFSWQDIEIIHNEYGKPEVVLKGKAKAIAAEKGIKEIKLSISHTSDYAMSVAIAVGGENS</sequence>
<evidence type="ECO:0000255" key="1">
    <source>
        <dbReference type="HAMAP-Rule" id="MF_00101"/>
    </source>
</evidence>
<accession>Q8R857</accession>